<feature type="chain" id="PRO_0000143197" description="Maturase K">
    <location>
        <begin position="1"/>
        <end position="508"/>
    </location>
</feature>
<accession>Q9TKS1</accession>
<organism>
    <name type="scientific">Abrus precatorius</name>
    <name type="common">Indian licorice</name>
    <name type="synonym">Glycine abrus</name>
    <dbReference type="NCBI Taxonomy" id="3816"/>
    <lineage>
        <taxon>Eukaryota</taxon>
        <taxon>Viridiplantae</taxon>
        <taxon>Streptophyta</taxon>
        <taxon>Embryophyta</taxon>
        <taxon>Tracheophyta</taxon>
        <taxon>Spermatophyta</taxon>
        <taxon>Magnoliopsida</taxon>
        <taxon>eudicotyledons</taxon>
        <taxon>Gunneridae</taxon>
        <taxon>Pentapetalae</taxon>
        <taxon>rosids</taxon>
        <taxon>fabids</taxon>
        <taxon>Fabales</taxon>
        <taxon>Fabaceae</taxon>
        <taxon>Papilionoideae</taxon>
        <taxon>50 kb inversion clade</taxon>
        <taxon>NPAAA clade</taxon>
        <taxon>indigoferoid/millettioid clade</taxon>
        <taxon>Abreae</taxon>
        <taxon>Abrus</taxon>
    </lineage>
</organism>
<gene>
    <name evidence="1" type="primary">matK</name>
</gene>
<reference key="1">
    <citation type="journal article" date="2000" name="Am. J. Bot.">
        <title>Phylogenetic systematics of the tribe Millettieae (Leguminosae) based on chloroplast trnK/matK sequences and its implications for evolutionary patterns in Papilionoideae.</title>
        <authorList>
            <person name="Hu J.-M."/>
            <person name="Lavin M."/>
            <person name="Wojciechowski M.F."/>
            <person name="Sanderson M.J."/>
        </authorList>
    </citation>
    <scope>NUCLEOTIDE SEQUENCE [GENOMIC DNA]</scope>
</reference>
<proteinExistence type="inferred from homology"/>
<comment type="function">
    <text evidence="1">Usually encoded in the trnK tRNA gene intron. Probably assists in splicing its own and other chloroplast group II introns.</text>
</comment>
<comment type="subcellular location">
    <subcellularLocation>
        <location>Plastid</location>
        <location>Chloroplast</location>
    </subcellularLocation>
</comment>
<comment type="similarity">
    <text evidence="1">Belongs to the intron maturase 2 family. MatK subfamily.</text>
</comment>
<evidence type="ECO:0000255" key="1">
    <source>
        <dbReference type="HAMAP-Rule" id="MF_01390"/>
    </source>
</evidence>
<protein>
    <recommendedName>
        <fullName evidence="1">Maturase K</fullName>
    </recommendedName>
    <alternativeName>
        <fullName evidence="1">Intron maturase</fullName>
    </alternativeName>
</protein>
<sequence>MEEYQVYLELNRSRHQDFLYPLIFREYIYGLTYGHDLNRSIFIENVGYDNKSSLLIVKRLITRMYQQSQLIISTNDSNKNLFWGYNNNIYSQIISEGFVVVVEIPFSLQFSSSLEGAEIVKFYKNLRSIHSIFPFFEDKLIYFNYESDIRIPYPIHLEILVQILRYWMKDVSFFHLLRFFFFYYCNWNSLITPKKLISTFSKSNPRFFLFLYNLYVWEHESIFLFLRNKSSHLRLESFCVFFERIFFYAKIEHLVQVIAKDFSYTLSFFKDPFIHYVRYQEKSILVSRNTPLLMNKWKYYFIHLWQCHFDVWSQPGTIHINQLSEHSFHFLDYFLNLQLNLSVVRSQMLQNSFLMEIVMKKLDTRVPIILLIRSLVKAKFCNVLGHPLSKSVWADLSDFDIIDRFLRICRNFSHYYNGSSKKKNLYRIKYILRLSCIKTLARKHKSTVRAFLKRLDSEKLLEEFFTEEEDIFSLIFPRTSSTLQRLYRGRIWYLDILFSHDPDLVNHS</sequence>
<geneLocation type="chloroplast"/>
<keyword id="KW-0150">Chloroplast</keyword>
<keyword id="KW-0507">mRNA processing</keyword>
<keyword id="KW-0934">Plastid</keyword>
<keyword id="KW-1185">Reference proteome</keyword>
<keyword id="KW-0694">RNA-binding</keyword>
<keyword id="KW-0819">tRNA processing</keyword>
<dbReference type="EMBL" id="AF142705">
    <property type="protein sequence ID" value="AAD52877.1"/>
    <property type="molecule type" value="Genomic_DNA"/>
</dbReference>
<dbReference type="Proteomes" id="UP000694853">
    <property type="component" value="Unplaced"/>
</dbReference>
<dbReference type="GO" id="GO:0009507">
    <property type="term" value="C:chloroplast"/>
    <property type="evidence" value="ECO:0007669"/>
    <property type="project" value="UniProtKB-SubCell"/>
</dbReference>
<dbReference type="GO" id="GO:0003723">
    <property type="term" value="F:RNA binding"/>
    <property type="evidence" value="ECO:0007669"/>
    <property type="project" value="UniProtKB-KW"/>
</dbReference>
<dbReference type="GO" id="GO:0006397">
    <property type="term" value="P:mRNA processing"/>
    <property type="evidence" value="ECO:0007669"/>
    <property type="project" value="UniProtKB-KW"/>
</dbReference>
<dbReference type="GO" id="GO:0008380">
    <property type="term" value="P:RNA splicing"/>
    <property type="evidence" value="ECO:0007669"/>
    <property type="project" value="UniProtKB-UniRule"/>
</dbReference>
<dbReference type="GO" id="GO:0008033">
    <property type="term" value="P:tRNA processing"/>
    <property type="evidence" value="ECO:0007669"/>
    <property type="project" value="UniProtKB-KW"/>
</dbReference>
<dbReference type="HAMAP" id="MF_01390">
    <property type="entry name" value="MatK"/>
    <property type="match status" value="1"/>
</dbReference>
<dbReference type="InterPro" id="IPR024937">
    <property type="entry name" value="Domain_X"/>
</dbReference>
<dbReference type="InterPro" id="IPR002866">
    <property type="entry name" value="Maturase_MatK"/>
</dbReference>
<dbReference type="InterPro" id="IPR024942">
    <property type="entry name" value="Maturase_MatK_N"/>
</dbReference>
<dbReference type="PANTHER" id="PTHR34811">
    <property type="entry name" value="MATURASE K"/>
    <property type="match status" value="1"/>
</dbReference>
<dbReference type="PANTHER" id="PTHR34811:SF1">
    <property type="entry name" value="MATURASE K"/>
    <property type="match status" value="1"/>
</dbReference>
<dbReference type="Pfam" id="PF01348">
    <property type="entry name" value="Intron_maturas2"/>
    <property type="match status" value="1"/>
</dbReference>
<dbReference type="Pfam" id="PF01824">
    <property type="entry name" value="MatK_N"/>
    <property type="match status" value="1"/>
</dbReference>
<name>MATK_ABRPR</name>